<protein>
    <recommendedName>
        <fullName>SH3 domain-containing protein 21</fullName>
    </recommendedName>
</protein>
<name>SH321_MACFA</name>
<keyword id="KW-0025">Alternative splicing</keyword>
<keyword id="KW-0175">Coiled coil</keyword>
<keyword id="KW-1185">Reference proteome</keyword>
<keyword id="KW-0728">SH3 domain</keyword>
<gene>
    <name type="primary">SH3D21</name>
    <name type="ORF">QtsA-16465</name>
    <name type="ORF">QtsA-19407</name>
</gene>
<sequence>MVQSELQLQPRAGGRAEAASWGDRGNDKGGFGNPDMPSVSPGPQRPPKLSSLAYDSPPDYLQTVSHPEAYRVLFDYQPEAPDELTLRRGDVVKVLSKTTEDKGWWEGECQGRRGVFPDNFVLPPPPIKKLVPRKVVSRQSAPIKEPKKLMPKTSLPTVKKLATAATGPSKAKTSRTPSRDSQKLTSRDSGPNGGFQSGGSCPPGRKRSKTQTPQQRSVSSQEEEHSSPAKAPSVKRTPMLDKTTTPERPPAPENAPGSKKIPVPDKVPSPEKTLTLGDKASIPGNSTSGKIPGPDIVPTPERMVTPEDKASIPENSIPEEALTVDKPSTPERLSSVEEASGPEVPPMDKVPDPKMAPLGDEAPTREKVLTPELSEEEVSTRDDTQFHHFSSEEALQKVKSFVAKEAPSSQEKAHTPEAPPLQPPSSEKCLGEMKCPLVRGDSSPHQAELKSGPASRPALEKPHPQAEATTLLEEAPSKEERTPEEEASPNEERLLRGEVLPKEGVASKGEVLPKEGVASKGEVLPKEGVASKEVLPKGGVASKEEVLPKEGVASKEEMLPKEGVASKEEVTLKEEVAPKEEVPPIDTAFAQKTHPIKPSPDSQETLTLPSLLPQNYTENKNEGVDVTSLRGEVESLRRALELMGVQLERKLTDIWEELKSEKEQRQRLEVQVMQGTQKSQTPRIIHAQTQTY</sequence>
<reference key="1">
    <citation type="submission" date="2005-06" db="EMBL/GenBank/DDBJ databases">
        <title>DNA sequences of macaque genes expressed in brain or testis and its evolutionary implications.</title>
        <authorList>
            <consortium name="International consortium for macaque cDNA sequencing and analysis"/>
        </authorList>
    </citation>
    <scope>NUCLEOTIDE SEQUENCE [LARGE SCALE MRNA] (ISOFORMS 1 AND 2)</scope>
    <source>
        <tissue>Testis</tissue>
    </source>
</reference>
<accession>Q4R729</accession>
<accession>Q4R357</accession>
<proteinExistence type="evidence at transcript level"/>
<comment type="alternative products">
    <event type="alternative splicing"/>
    <isoform>
        <id>Q4R729-1</id>
        <name>1</name>
        <sequence type="displayed"/>
    </isoform>
    <isoform>
        <id>Q4R729-2</id>
        <name>2</name>
        <sequence type="described" ref="VSP_033933 VSP_033934 VSP_033935"/>
    </isoform>
</comment>
<organism>
    <name type="scientific">Macaca fascicularis</name>
    <name type="common">Crab-eating macaque</name>
    <name type="synonym">Cynomolgus monkey</name>
    <dbReference type="NCBI Taxonomy" id="9541"/>
    <lineage>
        <taxon>Eukaryota</taxon>
        <taxon>Metazoa</taxon>
        <taxon>Chordata</taxon>
        <taxon>Craniata</taxon>
        <taxon>Vertebrata</taxon>
        <taxon>Euteleostomi</taxon>
        <taxon>Mammalia</taxon>
        <taxon>Eutheria</taxon>
        <taxon>Euarchontoglires</taxon>
        <taxon>Primates</taxon>
        <taxon>Haplorrhini</taxon>
        <taxon>Catarrhini</taxon>
        <taxon>Cercopithecidae</taxon>
        <taxon>Cercopithecinae</taxon>
        <taxon>Macaca</taxon>
    </lineage>
</organism>
<feature type="chain" id="PRO_0000337130" description="SH3 domain-containing protein 21">
    <location>
        <begin position="1"/>
        <end position="692"/>
    </location>
</feature>
<feature type="domain" description="SH3" evidence="2">
    <location>
        <begin position="65"/>
        <end position="126"/>
    </location>
</feature>
<feature type="region of interest" description="Disordered" evidence="3">
    <location>
        <begin position="1"/>
        <end position="60"/>
    </location>
</feature>
<feature type="region of interest" description="Disordered" evidence="3">
    <location>
        <begin position="132"/>
        <end position="501"/>
    </location>
</feature>
<feature type="region of interest" description="Disordered" evidence="3">
    <location>
        <begin position="536"/>
        <end position="605"/>
    </location>
</feature>
<feature type="region of interest" description="Disordered" evidence="3">
    <location>
        <begin position="672"/>
        <end position="692"/>
    </location>
</feature>
<feature type="coiled-coil region" evidence="1">
    <location>
        <begin position="628"/>
        <end position="678"/>
    </location>
</feature>
<feature type="compositionally biased region" description="Basic and acidic residues" evidence="3">
    <location>
        <begin position="177"/>
        <end position="186"/>
    </location>
</feature>
<feature type="compositionally biased region" description="Polar residues" evidence="3">
    <location>
        <begin position="210"/>
        <end position="220"/>
    </location>
</feature>
<feature type="compositionally biased region" description="Basic and acidic residues" evidence="3">
    <location>
        <begin position="378"/>
        <end position="396"/>
    </location>
</feature>
<feature type="compositionally biased region" description="Basic and acidic residues" evidence="3">
    <location>
        <begin position="490"/>
        <end position="501"/>
    </location>
</feature>
<feature type="compositionally biased region" description="Basic and acidic residues" evidence="3">
    <location>
        <begin position="542"/>
        <end position="582"/>
    </location>
</feature>
<feature type="compositionally biased region" description="Polar residues" evidence="3">
    <location>
        <begin position="673"/>
        <end position="692"/>
    </location>
</feature>
<feature type="splice variant" id="VSP_033933" description="In isoform 2." evidence="4">
    <location>
        <begin position="1"/>
        <end position="266"/>
    </location>
</feature>
<feature type="splice variant" id="VSP_033934" description="In isoform 2." evidence="4">
    <original>VPS</original>
    <variation>MAA</variation>
    <location>
        <begin position="267"/>
        <end position="269"/>
    </location>
</feature>
<feature type="splice variant" id="VSP_033935" description="In isoform 2." evidence="4">
    <location>
        <begin position="524"/>
        <end position="558"/>
    </location>
</feature>
<feature type="sequence conflict" description="In Ref. 1; BAE02462." evidence="5" ref="1">
    <original>S</original>
    <variation>F</variation>
    <location>
        <position position="334"/>
    </location>
</feature>
<feature type="sequence conflict" description="In Ref. 1; BAE02462." evidence="5" ref="1">
    <original>L</original>
    <variation>P</variation>
    <location>
        <position position="494"/>
    </location>
</feature>
<feature type="sequence conflict" description="In Ref. 1; BAE02462." evidence="5" ref="1">
    <original>G</original>
    <variation>E</variation>
    <location>
        <position position="497"/>
    </location>
</feature>
<feature type="sequence conflict" description="In Ref. 1; BAE02462." evidence="5" ref="1">
    <original>G</original>
    <variation>E</variation>
    <location>
        <position position="563"/>
    </location>
</feature>
<evidence type="ECO:0000255" key="1"/>
<evidence type="ECO:0000255" key="2">
    <source>
        <dbReference type="PROSITE-ProRule" id="PRU00192"/>
    </source>
</evidence>
<evidence type="ECO:0000256" key="3">
    <source>
        <dbReference type="SAM" id="MobiDB-lite"/>
    </source>
</evidence>
<evidence type="ECO:0000303" key="4">
    <source ref="1"/>
</evidence>
<evidence type="ECO:0000305" key="5"/>
<dbReference type="EMBL" id="AB169000">
    <property type="protein sequence ID" value="BAE01095.1"/>
    <property type="molecule type" value="mRNA"/>
</dbReference>
<dbReference type="EMBL" id="AB179411">
    <property type="protein sequence ID" value="BAE02462.1"/>
    <property type="molecule type" value="mRNA"/>
</dbReference>
<dbReference type="STRING" id="9541.ENSMFAP00000000191"/>
<dbReference type="eggNOG" id="KOG4348">
    <property type="taxonomic scope" value="Eukaryota"/>
</dbReference>
<dbReference type="Proteomes" id="UP000233100">
    <property type="component" value="Unplaced"/>
</dbReference>
<dbReference type="CDD" id="cd12142">
    <property type="entry name" value="SH3_D21-like"/>
    <property type="match status" value="1"/>
</dbReference>
<dbReference type="Gene3D" id="2.30.30.40">
    <property type="entry name" value="SH3 Domains"/>
    <property type="match status" value="1"/>
</dbReference>
<dbReference type="InterPro" id="IPR036028">
    <property type="entry name" value="SH3-like_dom_sf"/>
</dbReference>
<dbReference type="InterPro" id="IPR001452">
    <property type="entry name" value="SH3_domain"/>
</dbReference>
<dbReference type="InterPro" id="IPR035468">
    <property type="entry name" value="SH3D21_SH3"/>
</dbReference>
<dbReference type="InterPro" id="IPR050670">
    <property type="entry name" value="STAM"/>
</dbReference>
<dbReference type="PANTHER" id="PTHR45929">
    <property type="entry name" value="JAK PATHWAY SIGNAL TRANSDUCTION ADAPTOR MOLECULE"/>
    <property type="match status" value="1"/>
</dbReference>
<dbReference type="PANTHER" id="PTHR45929:SF3">
    <property type="entry name" value="JAK PATHWAY SIGNAL TRANSDUCTION ADAPTOR MOLECULE"/>
    <property type="match status" value="1"/>
</dbReference>
<dbReference type="Pfam" id="PF07653">
    <property type="entry name" value="SH3_2"/>
    <property type="match status" value="1"/>
</dbReference>
<dbReference type="PRINTS" id="PR00452">
    <property type="entry name" value="SH3DOMAIN"/>
</dbReference>
<dbReference type="PRINTS" id="PR01887">
    <property type="entry name" value="SPECTRNALPHA"/>
</dbReference>
<dbReference type="SMART" id="SM00326">
    <property type="entry name" value="SH3"/>
    <property type="match status" value="1"/>
</dbReference>
<dbReference type="SUPFAM" id="SSF50044">
    <property type="entry name" value="SH3-domain"/>
    <property type="match status" value="1"/>
</dbReference>
<dbReference type="PROSITE" id="PS50002">
    <property type="entry name" value="SH3"/>
    <property type="match status" value="1"/>
</dbReference>